<evidence type="ECO:0000255" key="1">
    <source>
        <dbReference type="HAMAP-Rule" id="MF_00086"/>
    </source>
</evidence>
<accession>A6LEL4</accession>
<keyword id="KW-0067">ATP-binding</keyword>
<keyword id="KW-0963">Cytoplasm</keyword>
<keyword id="KW-0460">Magnesium</keyword>
<keyword id="KW-0479">Metal-binding</keyword>
<keyword id="KW-0547">Nucleotide-binding</keyword>
<keyword id="KW-0554">One-carbon metabolism</keyword>
<keyword id="KW-0630">Potassium</keyword>
<keyword id="KW-1185">Reference proteome</keyword>
<keyword id="KW-0808">Transferase</keyword>
<name>METK_PARD8</name>
<gene>
    <name evidence="1" type="primary">metK</name>
    <name type="ordered locus">BDI_2403</name>
</gene>
<comment type="function">
    <text evidence="1">Catalyzes the formation of S-adenosylmethionine (AdoMet) from methionine and ATP. The overall synthetic reaction is composed of two sequential steps, AdoMet formation and the subsequent tripolyphosphate hydrolysis which occurs prior to release of AdoMet from the enzyme.</text>
</comment>
<comment type="catalytic activity">
    <reaction evidence="1">
        <text>L-methionine + ATP + H2O = S-adenosyl-L-methionine + phosphate + diphosphate</text>
        <dbReference type="Rhea" id="RHEA:21080"/>
        <dbReference type="ChEBI" id="CHEBI:15377"/>
        <dbReference type="ChEBI" id="CHEBI:30616"/>
        <dbReference type="ChEBI" id="CHEBI:33019"/>
        <dbReference type="ChEBI" id="CHEBI:43474"/>
        <dbReference type="ChEBI" id="CHEBI:57844"/>
        <dbReference type="ChEBI" id="CHEBI:59789"/>
        <dbReference type="EC" id="2.5.1.6"/>
    </reaction>
</comment>
<comment type="cofactor">
    <cofactor evidence="1">
        <name>Mg(2+)</name>
        <dbReference type="ChEBI" id="CHEBI:18420"/>
    </cofactor>
    <text evidence="1">Binds 2 divalent ions per subunit.</text>
</comment>
<comment type="cofactor">
    <cofactor evidence="1">
        <name>K(+)</name>
        <dbReference type="ChEBI" id="CHEBI:29103"/>
    </cofactor>
    <text evidence="1">Binds 1 potassium ion per subunit.</text>
</comment>
<comment type="pathway">
    <text evidence="1">Amino-acid biosynthesis; S-adenosyl-L-methionine biosynthesis; S-adenosyl-L-methionine from L-methionine: step 1/1.</text>
</comment>
<comment type="subunit">
    <text evidence="1">Homotetramer; dimer of dimers.</text>
</comment>
<comment type="subcellular location">
    <subcellularLocation>
        <location evidence="1">Cytoplasm</location>
    </subcellularLocation>
</comment>
<comment type="similarity">
    <text evidence="1">Belongs to the AdoMet synthase family.</text>
</comment>
<organism>
    <name type="scientific">Parabacteroides distasonis (strain ATCC 8503 / DSM 20701 / CIP 104284 / JCM 5825 / NCTC 11152)</name>
    <dbReference type="NCBI Taxonomy" id="435591"/>
    <lineage>
        <taxon>Bacteria</taxon>
        <taxon>Pseudomonadati</taxon>
        <taxon>Bacteroidota</taxon>
        <taxon>Bacteroidia</taxon>
        <taxon>Bacteroidales</taxon>
        <taxon>Tannerellaceae</taxon>
        <taxon>Parabacteroides</taxon>
    </lineage>
</organism>
<protein>
    <recommendedName>
        <fullName evidence="1">S-adenosylmethionine synthase</fullName>
        <shortName evidence="1">AdoMet synthase</shortName>
        <ecNumber evidence="1">2.5.1.6</ecNumber>
    </recommendedName>
    <alternativeName>
        <fullName evidence="1">MAT</fullName>
    </alternativeName>
    <alternativeName>
        <fullName evidence="1">Methionine adenosyltransferase</fullName>
    </alternativeName>
</protein>
<reference key="1">
    <citation type="journal article" date="2007" name="PLoS Biol.">
        <title>Evolution of symbiotic bacteria in the distal human intestine.</title>
        <authorList>
            <person name="Xu J."/>
            <person name="Mahowald M.A."/>
            <person name="Ley R.E."/>
            <person name="Lozupone C.A."/>
            <person name="Hamady M."/>
            <person name="Martens E.C."/>
            <person name="Henrissat B."/>
            <person name="Coutinho P.M."/>
            <person name="Minx P."/>
            <person name="Latreille P."/>
            <person name="Cordum H."/>
            <person name="Van Brunt A."/>
            <person name="Kim K."/>
            <person name="Fulton R.S."/>
            <person name="Fulton L.A."/>
            <person name="Clifton S.W."/>
            <person name="Wilson R.K."/>
            <person name="Knight R.D."/>
            <person name="Gordon J.I."/>
        </authorList>
    </citation>
    <scope>NUCLEOTIDE SEQUENCE [LARGE SCALE GENOMIC DNA]</scope>
    <source>
        <strain>ATCC 8503 / DSM 20701 / CIP 104284 / JCM 5825 / NCTC 11152</strain>
    </source>
</reference>
<sequence length="428" mass="47345">MSYLFTSESVSEGHPDKVADQISDALLDEFLAYDKNSKVACETLVTTGQVVLAGEVKSSAYVDVQEVARGVIEKIGYTKSEYQFEAKSCGVFSSIHEQSGDINRGVERADPYEQGAGDQGMMFGYATNETENYMPLALDLSHSLLWELAKIRKEEPDLMPYLRPDAKSQVTIEYDDNGKPLRIDTIVVSTQHDEFIGPKGISQKEADEAMQKRIALDVKKILIPRVKAQYPAHVQALFNDNIIYHVNPTGKFVIGGPHGDTGLTGRKIIVDTYGGKGAHGGGAFSGKDPSKVDRSAAYAARHIAKNMVAAGVADEMLVQVSYAIGVAKPMNIFVNTFGRAKVNMTDGEIAAKIWDIFDMRPKAIEERLKLRNPIYFETASYGHMGRKPQTVTKTFSSRYLQKPVTCDVELFTWEKLDYADKIKDVFGL</sequence>
<feature type="chain" id="PRO_0000302953" description="S-adenosylmethionine synthase">
    <location>
        <begin position="1"/>
        <end position="428"/>
    </location>
</feature>
<feature type="region of interest" description="Flexible loop" evidence="1">
    <location>
        <begin position="98"/>
        <end position="108"/>
    </location>
</feature>
<feature type="binding site" description="in other chain" evidence="1">
    <location>
        <position position="14"/>
    </location>
    <ligand>
        <name>ATP</name>
        <dbReference type="ChEBI" id="CHEBI:30616"/>
        <note>ligand shared between two neighboring subunits</note>
    </ligand>
</feature>
<feature type="binding site" evidence="1">
    <location>
        <position position="16"/>
    </location>
    <ligand>
        <name>Mg(2+)</name>
        <dbReference type="ChEBI" id="CHEBI:18420"/>
    </ligand>
</feature>
<feature type="binding site" evidence="1">
    <location>
        <position position="42"/>
    </location>
    <ligand>
        <name>K(+)</name>
        <dbReference type="ChEBI" id="CHEBI:29103"/>
    </ligand>
</feature>
<feature type="binding site" description="in other chain" evidence="1">
    <location>
        <position position="55"/>
    </location>
    <ligand>
        <name>L-methionine</name>
        <dbReference type="ChEBI" id="CHEBI:57844"/>
        <note>ligand shared between two neighboring subunits</note>
    </ligand>
</feature>
<feature type="binding site" description="in other chain" evidence="1">
    <location>
        <position position="98"/>
    </location>
    <ligand>
        <name>L-methionine</name>
        <dbReference type="ChEBI" id="CHEBI:57844"/>
        <note>ligand shared between two neighboring subunits</note>
    </ligand>
</feature>
<feature type="binding site" description="in other chain" evidence="1">
    <location>
        <begin position="165"/>
        <end position="167"/>
    </location>
    <ligand>
        <name>ATP</name>
        <dbReference type="ChEBI" id="CHEBI:30616"/>
        <note>ligand shared between two neighboring subunits</note>
    </ligand>
</feature>
<feature type="binding site" description="in other chain" evidence="1">
    <location>
        <begin position="251"/>
        <end position="252"/>
    </location>
    <ligand>
        <name>ATP</name>
        <dbReference type="ChEBI" id="CHEBI:30616"/>
        <note>ligand shared between two neighboring subunits</note>
    </ligand>
</feature>
<feature type="binding site" evidence="1">
    <location>
        <position position="260"/>
    </location>
    <ligand>
        <name>ATP</name>
        <dbReference type="ChEBI" id="CHEBI:30616"/>
        <note>ligand shared between two neighboring subunits</note>
    </ligand>
</feature>
<feature type="binding site" evidence="1">
    <location>
        <position position="260"/>
    </location>
    <ligand>
        <name>L-methionine</name>
        <dbReference type="ChEBI" id="CHEBI:57844"/>
        <note>ligand shared between two neighboring subunits</note>
    </ligand>
</feature>
<feature type="binding site" description="in other chain" evidence="1">
    <location>
        <begin position="266"/>
        <end position="267"/>
    </location>
    <ligand>
        <name>ATP</name>
        <dbReference type="ChEBI" id="CHEBI:30616"/>
        <note>ligand shared between two neighboring subunits</note>
    </ligand>
</feature>
<feature type="binding site" evidence="1">
    <location>
        <position position="283"/>
    </location>
    <ligand>
        <name>ATP</name>
        <dbReference type="ChEBI" id="CHEBI:30616"/>
        <note>ligand shared between two neighboring subunits</note>
    </ligand>
</feature>
<feature type="binding site" evidence="1">
    <location>
        <position position="287"/>
    </location>
    <ligand>
        <name>ATP</name>
        <dbReference type="ChEBI" id="CHEBI:30616"/>
        <note>ligand shared between two neighboring subunits</note>
    </ligand>
</feature>
<feature type="binding site" description="in other chain" evidence="1">
    <location>
        <position position="291"/>
    </location>
    <ligand>
        <name>L-methionine</name>
        <dbReference type="ChEBI" id="CHEBI:57844"/>
        <note>ligand shared between two neighboring subunits</note>
    </ligand>
</feature>
<proteinExistence type="inferred from homology"/>
<dbReference type="EC" id="2.5.1.6" evidence="1"/>
<dbReference type="EMBL" id="CP000140">
    <property type="protein sequence ID" value="ABR44128.1"/>
    <property type="molecule type" value="Genomic_DNA"/>
</dbReference>
<dbReference type="RefSeq" id="WP_005867099.1">
    <property type="nucleotide sequence ID" value="NZ_LR215978.1"/>
</dbReference>
<dbReference type="SMR" id="A6LEL4"/>
<dbReference type="STRING" id="435591.BDI_2403"/>
<dbReference type="PaxDb" id="435591-BDI_2403"/>
<dbReference type="GeneID" id="93522395"/>
<dbReference type="KEGG" id="pdi:BDI_2403"/>
<dbReference type="eggNOG" id="COG0192">
    <property type="taxonomic scope" value="Bacteria"/>
</dbReference>
<dbReference type="HOGENOM" id="CLU_041802_1_1_10"/>
<dbReference type="BioCyc" id="PDIS435591:G1G5A-2469-MONOMER"/>
<dbReference type="UniPathway" id="UPA00315">
    <property type="reaction ID" value="UER00080"/>
</dbReference>
<dbReference type="Proteomes" id="UP000000566">
    <property type="component" value="Chromosome"/>
</dbReference>
<dbReference type="GO" id="GO:0005737">
    <property type="term" value="C:cytoplasm"/>
    <property type="evidence" value="ECO:0007669"/>
    <property type="project" value="UniProtKB-SubCell"/>
</dbReference>
<dbReference type="GO" id="GO:0005524">
    <property type="term" value="F:ATP binding"/>
    <property type="evidence" value="ECO:0007669"/>
    <property type="project" value="UniProtKB-UniRule"/>
</dbReference>
<dbReference type="GO" id="GO:0000287">
    <property type="term" value="F:magnesium ion binding"/>
    <property type="evidence" value="ECO:0007669"/>
    <property type="project" value="UniProtKB-UniRule"/>
</dbReference>
<dbReference type="GO" id="GO:0004478">
    <property type="term" value="F:methionine adenosyltransferase activity"/>
    <property type="evidence" value="ECO:0007669"/>
    <property type="project" value="UniProtKB-UniRule"/>
</dbReference>
<dbReference type="GO" id="GO:0006730">
    <property type="term" value="P:one-carbon metabolic process"/>
    <property type="evidence" value="ECO:0007669"/>
    <property type="project" value="UniProtKB-KW"/>
</dbReference>
<dbReference type="GO" id="GO:0006556">
    <property type="term" value="P:S-adenosylmethionine biosynthetic process"/>
    <property type="evidence" value="ECO:0007669"/>
    <property type="project" value="UniProtKB-UniRule"/>
</dbReference>
<dbReference type="CDD" id="cd18079">
    <property type="entry name" value="S-AdoMet_synt"/>
    <property type="match status" value="1"/>
</dbReference>
<dbReference type="FunFam" id="3.30.300.10:FF:000020">
    <property type="entry name" value="S-adenosylmethionine synthase"/>
    <property type="match status" value="1"/>
</dbReference>
<dbReference type="Gene3D" id="3.30.300.10">
    <property type="match status" value="3"/>
</dbReference>
<dbReference type="HAMAP" id="MF_00086">
    <property type="entry name" value="S_AdoMet_synth1"/>
    <property type="match status" value="1"/>
</dbReference>
<dbReference type="InterPro" id="IPR022631">
    <property type="entry name" value="ADOMET_SYNTHASE_CS"/>
</dbReference>
<dbReference type="InterPro" id="IPR022630">
    <property type="entry name" value="S-AdoMet_synt_C"/>
</dbReference>
<dbReference type="InterPro" id="IPR022629">
    <property type="entry name" value="S-AdoMet_synt_central"/>
</dbReference>
<dbReference type="InterPro" id="IPR022628">
    <property type="entry name" value="S-AdoMet_synt_N"/>
</dbReference>
<dbReference type="InterPro" id="IPR002133">
    <property type="entry name" value="S-AdoMet_synthetase"/>
</dbReference>
<dbReference type="InterPro" id="IPR022636">
    <property type="entry name" value="S-AdoMet_synthetase_sfam"/>
</dbReference>
<dbReference type="NCBIfam" id="TIGR01034">
    <property type="entry name" value="metK"/>
    <property type="match status" value="1"/>
</dbReference>
<dbReference type="PANTHER" id="PTHR11964">
    <property type="entry name" value="S-ADENOSYLMETHIONINE SYNTHETASE"/>
    <property type="match status" value="1"/>
</dbReference>
<dbReference type="Pfam" id="PF02773">
    <property type="entry name" value="S-AdoMet_synt_C"/>
    <property type="match status" value="1"/>
</dbReference>
<dbReference type="Pfam" id="PF02772">
    <property type="entry name" value="S-AdoMet_synt_M"/>
    <property type="match status" value="1"/>
</dbReference>
<dbReference type="Pfam" id="PF00438">
    <property type="entry name" value="S-AdoMet_synt_N"/>
    <property type="match status" value="1"/>
</dbReference>
<dbReference type="PIRSF" id="PIRSF000497">
    <property type="entry name" value="MAT"/>
    <property type="match status" value="1"/>
</dbReference>
<dbReference type="SUPFAM" id="SSF55973">
    <property type="entry name" value="S-adenosylmethionine synthetase"/>
    <property type="match status" value="3"/>
</dbReference>
<dbReference type="PROSITE" id="PS00376">
    <property type="entry name" value="ADOMET_SYNTHASE_1"/>
    <property type="match status" value="1"/>
</dbReference>
<dbReference type="PROSITE" id="PS00377">
    <property type="entry name" value="ADOMET_SYNTHASE_2"/>
    <property type="match status" value="1"/>
</dbReference>